<keyword id="KW-0240">DNA-directed RNA polymerase</keyword>
<keyword id="KW-0460">Magnesium</keyword>
<keyword id="KW-0479">Metal-binding</keyword>
<keyword id="KW-0548">Nucleotidyltransferase</keyword>
<keyword id="KW-1185">Reference proteome</keyword>
<keyword id="KW-0804">Transcription</keyword>
<keyword id="KW-0808">Transferase</keyword>
<keyword id="KW-0862">Zinc</keyword>
<comment type="function">
    <text evidence="1">DNA-dependent RNA polymerase catalyzes the transcription of DNA into RNA using the four ribonucleoside triphosphates as substrates.</text>
</comment>
<comment type="catalytic activity">
    <reaction evidence="1">
        <text>RNA(n) + a ribonucleoside 5'-triphosphate = RNA(n+1) + diphosphate</text>
        <dbReference type="Rhea" id="RHEA:21248"/>
        <dbReference type="Rhea" id="RHEA-COMP:14527"/>
        <dbReference type="Rhea" id="RHEA-COMP:17342"/>
        <dbReference type="ChEBI" id="CHEBI:33019"/>
        <dbReference type="ChEBI" id="CHEBI:61557"/>
        <dbReference type="ChEBI" id="CHEBI:140395"/>
        <dbReference type="EC" id="2.7.7.6"/>
    </reaction>
</comment>
<comment type="cofactor">
    <cofactor evidence="1">
        <name>Mg(2+)</name>
        <dbReference type="ChEBI" id="CHEBI:18420"/>
    </cofactor>
    <text evidence="1">Binds 1 Mg(2+) ion per subunit.</text>
</comment>
<comment type="cofactor">
    <cofactor evidence="1">
        <name>Zn(2+)</name>
        <dbReference type="ChEBI" id="CHEBI:29105"/>
    </cofactor>
    <text evidence="1">Binds 2 Zn(2+) ions per subunit.</text>
</comment>
<comment type="subunit">
    <text evidence="1">The RNAP catalytic core consists of 2 alpha, 1 beta, 1 beta' and 1 omega subunit. When a sigma factor is associated with the core the holoenzyme is formed, which can initiate transcription.</text>
</comment>
<comment type="similarity">
    <text evidence="1">Belongs to the RNA polymerase beta' chain family.</text>
</comment>
<proteinExistence type="inferred from homology"/>
<evidence type="ECO:0000255" key="1">
    <source>
        <dbReference type="HAMAP-Rule" id="MF_01322"/>
    </source>
</evidence>
<name>RPOC_XANP2</name>
<feature type="chain" id="PRO_1000141800" description="DNA-directed RNA polymerase subunit beta'">
    <location>
        <begin position="1"/>
        <end position="1394"/>
    </location>
</feature>
<feature type="binding site" evidence="1">
    <location>
        <position position="71"/>
    </location>
    <ligand>
        <name>Zn(2+)</name>
        <dbReference type="ChEBI" id="CHEBI:29105"/>
        <label>1</label>
    </ligand>
</feature>
<feature type="binding site" evidence="1">
    <location>
        <position position="73"/>
    </location>
    <ligand>
        <name>Zn(2+)</name>
        <dbReference type="ChEBI" id="CHEBI:29105"/>
        <label>1</label>
    </ligand>
</feature>
<feature type="binding site" evidence="1">
    <location>
        <position position="86"/>
    </location>
    <ligand>
        <name>Zn(2+)</name>
        <dbReference type="ChEBI" id="CHEBI:29105"/>
        <label>1</label>
    </ligand>
</feature>
<feature type="binding site" evidence="1">
    <location>
        <position position="89"/>
    </location>
    <ligand>
        <name>Zn(2+)</name>
        <dbReference type="ChEBI" id="CHEBI:29105"/>
        <label>1</label>
    </ligand>
</feature>
<feature type="binding site" evidence="1">
    <location>
        <position position="462"/>
    </location>
    <ligand>
        <name>Mg(2+)</name>
        <dbReference type="ChEBI" id="CHEBI:18420"/>
    </ligand>
</feature>
<feature type="binding site" evidence="1">
    <location>
        <position position="464"/>
    </location>
    <ligand>
        <name>Mg(2+)</name>
        <dbReference type="ChEBI" id="CHEBI:18420"/>
    </ligand>
</feature>
<feature type="binding site" evidence="1">
    <location>
        <position position="466"/>
    </location>
    <ligand>
        <name>Mg(2+)</name>
        <dbReference type="ChEBI" id="CHEBI:18420"/>
    </ligand>
</feature>
<feature type="binding site" evidence="1">
    <location>
        <position position="811"/>
    </location>
    <ligand>
        <name>Zn(2+)</name>
        <dbReference type="ChEBI" id="CHEBI:29105"/>
        <label>2</label>
    </ligand>
</feature>
<feature type="binding site" evidence="1">
    <location>
        <position position="885"/>
    </location>
    <ligand>
        <name>Zn(2+)</name>
        <dbReference type="ChEBI" id="CHEBI:29105"/>
        <label>2</label>
    </ligand>
</feature>
<feature type="binding site" evidence="1">
    <location>
        <position position="892"/>
    </location>
    <ligand>
        <name>Zn(2+)</name>
        <dbReference type="ChEBI" id="CHEBI:29105"/>
        <label>2</label>
    </ligand>
</feature>
<feature type="binding site" evidence="1">
    <location>
        <position position="895"/>
    </location>
    <ligand>
        <name>Zn(2+)</name>
        <dbReference type="ChEBI" id="CHEBI:29105"/>
        <label>2</label>
    </ligand>
</feature>
<organism>
    <name type="scientific">Xanthobacter autotrophicus (strain ATCC BAA-1158 / Py2)</name>
    <dbReference type="NCBI Taxonomy" id="78245"/>
    <lineage>
        <taxon>Bacteria</taxon>
        <taxon>Pseudomonadati</taxon>
        <taxon>Pseudomonadota</taxon>
        <taxon>Alphaproteobacteria</taxon>
        <taxon>Hyphomicrobiales</taxon>
        <taxon>Xanthobacteraceae</taxon>
        <taxon>Xanthobacter</taxon>
    </lineage>
</organism>
<sequence>MNQEVLNVFNPTVPAPAFNQIRITIASPDKIKSWSYGEIKKPETINYRTFKPERDGLFCARIFGPIKDYECLCGKYKRMKYKGIICEKCGVEVTLSRVRRERMGHIELAAPVAHIWFLKSLPSRIGLLLDMTLKDLERILYFEYFVVIEPGTTKLKYRQLLSEDEYLRAQDEFGETNFTAMIGAEAIREILRGMDLDKIAADLRVEIAEATTELKPKKLAKRLKIVEAFQQSGNKPEWMILTHVPVIPPDLRPLVPLDGGRFATSDLNDLYRRVINRNNRLKRLIELRAPDIIIRNEKRMLQEAVDALFDNGRRGRVITGANKRPLKSLADMLKGKQGRFRQNLLGKRVDYSGRSVIVVGPELKLHQCGLPKKMALELFKPFIYSRLDAKGHSATVKQAKKLVEKERPEVWDILDEVIREHPVMLNRAPTLHRLGIQAFEPVLIEGKAIQLHPLVCSAFNADFDGDQMAVHVPLSLEAQLEARVLMMSTNNILHPANGQPIIVPSQDIVLGLYYLSIMKEKEPGEGMMFANMAEIDHALNAKAITLATKIRGRYNGVDAEGKPYSKIYETSPGRMKIGELLPKHPKLSYDVVNKLMTKKEISNMIDAVYRHCGQKESVIFCDRIMALGFYNAFRAGISFGKDDMVVPKKKWDLVEETRALTKEYEQQYNDGLITQGEKYNKVVDAWGKCSDRVAEEMMKEISSVKKDPKTGREKQINSIYMMSHSGARGSPAQMKQLAGMRGLMAKPSGEIIESPIISNFKEGLTVMEYFNSTHGARKGLADTALKTANSGYLTRRLVDVAQDSIITERDCGSEKGIHMRAIIDAGQVVASLASRVLGRTAAEDIVEPATGNVIVPRGTMIEEWHVERINKSGIQEIKIRSVLTCETRNGVCGTCYGRDLARGTPVNMGEAVGVIAAQSIGEPGTQLTMRTFHIGGAATLADSSYVESNFEGIVRIRNRNVARNSEGDLVVMARNLAVVIVDVDGTERAVNRVQYGARLKVDEGDTIKRGQRIAEWDPYTRPILSEVDGIVAFEDLTEGSSMNETVDESTGIAKRVVTDSRSGRGPELRPAILIKGKDGKIIKLPRGGDARYALPVEAIISVDPNQTLKAGDAVARVPMESAKTRDITGGLPRVAELFEARRPKDAAIIAEISGTIRFGRDYKNKRRLSIEPADGGDAVEYLIPKGKHIHLQDGDVVEKGDFIVDGNPAPHDILAIKGVEELAAFLVNEIQEVYRLQGVHINDKHIEVIVRNMLQKVEIDDSGETDFLDGEQVDRIEFIEANEKAAEEAKKPATGHPVLLGITKASLQTRSFFSAASFQETTRVLTEAAVNGKVDPLEGLKENVIVGRLIPAGTGAQMARLRTIANSRDDLIVATRDEQSEGQPLVQGPADAAE</sequence>
<protein>
    <recommendedName>
        <fullName evidence="1">DNA-directed RNA polymerase subunit beta'</fullName>
        <shortName evidence="1">RNAP subunit beta'</shortName>
        <ecNumber evidence="1">2.7.7.6</ecNumber>
    </recommendedName>
    <alternativeName>
        <fullName evidence="1">RNA polymerase subunit beta'</fullName>
    </alternativeName>
    <alternativeName>
        <fullName evidence="1">Transcriptase subunit beta'</fullName>
    </alternativeName>
</protein>
<accession>A7IKQ1</accession>
<gene>
    <name evidence="1" type="primary">rpoC</name>
    <name type="ordered locus">Xaut_3365</name>
</gene>
<reference key="1">
    <citation type="submission" date="2007-07" db="EMBL/GenBank/DDBJ databases">
        <title>Complete sequence of chromosome of Xanthobacter autotrophicus Py2.</title>
        <authorList>
            <consortium name="US DOE Joint Genome Institute"/>
            <person name="Copeland A."/>
            <person name="Lucas S."/>
            <person name="Lapidus A."/>
            <person name="Barry K."/>
            <person name="Glavina del Rio T."/>
            <person name="Hammon N."/>
            <person name="Israni S."/>
            <person name="Dalin E."/>
            <person name="Tice H."/>
            <person name="Pitluck S."/>
            <person name="Sims D."/>
            <person name="Brettin T."/>
            <person name="Bruce D."/>
            <person name="Detter J.C."/>
            <person name="Han C."/>
            <person name="Tapia R."/>
            <person name="Brainard J."/>
            <person name="Schmutz J."/>
            <person name="Larimer F."/>
            <person name="Land M."/>
            <person name="Hauser L."/>
            <person name="Kyrpides N."/>
            <person name="Kim E."/>
            <person name="Ensigns S.A."/>
            <person name="Richardson P."/>
        </authorList>
    </citation>
    <scope>NUCLEOTIDE SEQUENCE [LARGE SCALE GENOMIC DNA]</scope>
    <source>
        <strain>ATCC BAA-1158 / Py2</strain>
    </source>
</reference>
<dbReference type="EC" id="2.7.7.6" evidence="1"/>
<dbReference type="EMBL" id="CP000781">
    <property type="protein sequence ID" value="ABS68594.1"/>
    <property type="molecule type" value="Genomic_DNA"/>
</dbReference>
<dbReference type="SMR" id="A7IKQ1"/>
<dbReference type="STRING" id="78245.Xaut_3365"/>
<dbReference type="KEGG" id="xau:Xaut_3365"/>
<dbReference type="eggNOG" id="COG0086">
    <property type="taxonomic scope" value="Bacteria"/>
</dbReference>
<dbReference type="HOGENOM" id="CLU_000524_3_1_5"/>
<dbReference type="OrthoDB" id="9815296at2"/>
<dbReference type="PhylomeDB" id="A7IKQ1"/>
<dbReference type="Proteomes" id="UP000002417">
    <property type="component" value="Chromosome"/>
</dbReference>
<dbReference type="GO" id="GO:0000428">
    <property type="term" value="C:DNA-directed RNA polymerase complex"/>
    <property type="evidence" value="ECO:0007669"/>
    <property type="project" value="UniProtKB-KW"/>
</dbReference>
<dbReference type="GO" id="GO:0003677">
    <property type="term" value="F:DNA binding"/>
    <property type="evidence" value="ECO:0007669"/>
    <property type="project" value="UniProtKB-UniRule"/>
</dbReference>
<dbReference type="GO" id="GO:0003899">
    <property type="term" value="F:DNA-directed RNA polymerase activity"/>
    <property type="evidence" value="ECO:0007669"/>
    <property type="project" value="UniProtKB-UniRule"/>
</dbReference>
<dbReference type="GO" id="GO:0000287">
    <property type="term" value="F:magnesium ion binding"/>
    <property type="evidence" value="ECO:0007669"/>
    <property type="project" value="UniProtKB-UniRule"/>
</dbReference>
<dbReference type="GO" id="GO:0008270">
    <property type="term" value="F:zinc ion binding"/>
    <property type="evidence" value="ECO:0007669"/>
    <property type="project" value="UniProtKB-UniRule"/>
</dbReference>
<dbReference type="GO" id="GO:0006351">
    <property type="term" value="P:DNA-templated transcription"/>
    <property type="evidence" value="ECO:0007669"/>
    <property type="project" value="UniProtKB-UniRule"/>
</dbReference>
<dbReference type="CDD" id="cd02655">
    <property type="entry name" value="RNAP_beta'_C"/>
    <property type="match status" value="1"/>
</dbReference>
<dbReference type="CDD" id="cd01609">
    <property type="entry name" value="RNAP_beta'_N"/>
    <property type="match status" value="1"/>
</dbReference>
<dbReference type="FunFam" id="4.10.860.120:FF:000001">
    <property type="entry name" value="DNA-directed RNA polymerase subunit beta"/>
    <property type="match status" value="1"/>
</dbReference>
<dbReference type="Gene3D" id="1.10.132.30">
    <property type="match status" value="1"/>
</dbReference>
<dbReference type="Gene3D" id="1.10.150.390">
    <property type="match status" value="1"/>
</dbReference>
<dbReference type="Gene3D" id="1.10.1790.20">
    <property type="match status" value="1"/>
</dbReference>
<dbReference type="Gene3D" id="1.10.40.90">
    <property type="match status" value="1"/>
</dbReference>
<dbReference type="Gene3D" id="2.40.40.20">
    <property type="match status" value="1"/>
</dbReference>
<dbReference type="Gene3D" id="2.40.50.100">
    <property type="match status" value="3"/>
</dbReference>
<dbReference type="Gene3D" id="4.10.860.120">
    <property type="entry name" value="RNA polymerase II, clamp domain"/>
    <property type="match status" value="1"/>
</dbReference>
<dbReference type="Gene3D" id="1.10.274.100">
    <property type="entry name" value="RNA polymerase Rpb1, domain 3"/>
    <property type="match status" value="2"/>
</dbReference>
<dbReference type="HAMAP" id="MF_01322">
    <property type="entry name" value="RNApol_bact_RpoC"/>
    <property type="match status" value="1"/>
</dbReference>
<dbReference type="InterPro" id="IPR045867">
    <property type="entry name" value="DNA-dir_RpoC_beta_prime"/>
</dbReference>
<dbReference type="InterPro" id="IPR012754">
    <property type="entry name" value="DNA-dir_RpoC_beta_prime_bact"/>
</dbReference>
<dbReference type="InterPro" id="IPR000722">
    <property type="entry name" value="RNA_pol_asu"/>
</dbReference>
<dbReference type="InterPro" id="IPR006592">
    <property type="entry name" value="RNA_pol_N"/>
</dbReference>
<dbReference type="InterPro" id="IPR007080">
    <property type="entry name" value="RNA_pol_Rpb1_1"/>
</dbReference>
<dbReference type="InterPro" id="IPR007066">
    <property type="entry name" value="RNA_pol_Rpb1_3"/>
</dbReference>
<dbReference type="InterPro" id="IPR042102">
    <property type="entry name" value="RNA_pol_Rpb1_3_sf"/>
</dbReference>
<dbReference type="InterPro" id="IPR007083">
    <property type="entry name" value="RNA_pol_Rpb1_4"/>
</dbReference>
<dbReference type="InterPro" id="IPR007081">
    <property type="entry name" value="RNA_pol_Rpb1_5"/>
</dbReference>
<dbReference type="InterPro" id="IPR044893">
    <property type="entry name" value="RNA_pol_Rpb1_clamp_domain"/>
</dbReference>
<dbReference type="InterPro" id="IPR038120">
    <property type="entry name" value="Rpb1_funnel_sf"/>
</dbReference>
<dbReference type="NCBIfam" id="TIGR02386">
    <property type="entry name" value="rpoC_TIGR"/>
    <property type="match status" value="1"/>
</dbReference>
<dbReference type="PANTHER" id="PTHR19376">
    <property type="entry name" value="DNA-DIRECTED RNA POLYMERASE"/>
    <property type="match status" value="1"/>
</dbReference>
<dbReference type="PANTHER" id="PTHR19376:SF54">
    <property type="entry name" value="DNA-DIRECTED RNA POLYMERASE SUBUNIT BETA"/>
    <property type="match status" value="1"/>
</dbReference>
<dbReference type="Pfam" id="PF04997">
    <property type="entry name" value="RNA_pol_Rpb1_1"/>
    <property type="match status" value="1"/>
</dbReference>
<dbReference type="Pfam" id="PF00623">
    <property type="entry name" value="RNA_pol_Rpb1_2"/>
    <property type="match status" value="1"/>
</dbReference>
<dbReference type="Pfam" id="PF04983">
    <property type="entry name" value="RNA_pol_Rpb1_3"/>
    <property type="match status" value="1"/>
</dbReference>
<dbReference type="Pfam" id="PF05000">
    <property type="entry name" value="RNA_pol_Rpb1_4"/>
    <property type="match status" value="1"/>
</dbReference>
<dbReference type="Pfam" id="PF04998">
    <property type="entry name" value="RNA_pol_Rpb1_5"/>
    <property type="match status" value="1"/>
</dbReference>
<dbReference type="SMART" id="SM00663">
    <property type="entry name" value="RPOLA_N"/>
    <property type="match status" value="1"/>
</dbReference>
<dbReference type="SUPFAM" id="SSF64484">
    <property type="entry name" value="beta and beta-prime subunits of DNA dependent RNA-polymerase"/>
    <property type="match status" value="1"/>
</dbReference>